<gene>
    <name evidence="1" type="primary">rhaR</name>
    <name type="ordered locus">SPAB_05016</name>
</gene>
<accession>A9MZC9</accession>
<keyword id="KW-0010">Activator</keyword>
<keyword id="KW-0963">Cytoplasm</keyword>
<keyword id="KW-0238">DNA-binding</keyword>
<keyword id="KW-0677">Repeat</keyword>
<keyword id="KW-0684">Rhamnose metabolism</keyword>
<keyword id="KW-0804">Transcription</keyword>
<keyword id="KW-0805">Transcription regulation</keyword>
<feature type="chain" id="PRO_1000087597" description="HTH-type transcriptional activator RhaR">
    <location>
        <begin position="1"/>
        <end position="282"/>
    </location>
</feature>
<feature type="domain" description="HTH araC/xylS-type" evidence="1">
    <location>
        <begin position="179"/>
        <end position="277"/>
    </location>
</feature>
<feature type="DNA-binding region" description="H-T-H motif" evidence="1">
    <location>
        <begin position="196"/>
        <end position="217"/>
    </location>
</feature>
<feature type="DNA-binding region" description="H-T-H motif" evidence="1">
    <location>
        <begin position="244"/>
        <end position="267"/>
    </location>
</feature>
<feature type="site" description="Interaction with sigma-70" evidence="1">
    <location>
        <position position="246"/>
    </location>
</feature>
<comment type="function">
    <text evidence="1">Activates expression of the rhaSR operon in response to L-rhamnose.</text>
</comment>
<comment type="subunit">
    <text evidence="1">Binds DNA as a dimer.</text>
</comment>
<comment type="subcellular location">
    <subcellularLocation>
        <location evidence="1">Cytoplasm</location>
    </subcellularLocation>
</comment>
<reference key="1">
    <citation type="submission" date="2007-11" db="EMBL/GenBank/DDBJ databases">
        <authorList>
            <consortium name="The Salmonella enterica serovar Paratyphi B Genome Sequencing Project"/>
            <person name="McClelland M."/>
            <person name="Sanderson E.K."/>
            <person name="Porwollik S."/>
            <person name="Spieth J."/>
            <person name="Clifton W.S."/>
            <person name="Fulton R."/>
            <person name="Cordes M."/>
            <person name="Wollam A."/>
            <person name="Shah N."/>
            <person name="Pepin K."/>
            <person name="Bhonagiri V."/>
            <person name="Nash W."/>
            <person name="Johnson M."/>
            <person name="Thiruvilangam P."/>
            <person name="Wilson R."/>
        </authorList>
    </citation>
    <scope>NUCLEOTIDE SEQUENCE [LARGE SCALE GENOMIC DNA]</scope>
    <source>
        <strain>ATCC BAA-1250 / SPB7</strain>
    </source>
</reference>
<evidence type="ECO:0000255" key="1">
    <source>
        <dbReference type="HAMAP-Rule" id="MF_01533"/>
    </source>
</evidence>
<organism>
    <name type="scientific">Salmonella paratyphi B (strain ATCC BAA-1250 / SPB7)</name>
    <dbReference type="NCBI Taxonomy" id="1016998"/>
    <lineage>
        <taxon>Bacteria</taxon>
        <taxon>Pseudomonadati</taxon>
        <taxon>Pseudomonadota</taxon>
        <taxon>Gammaproteobacteria</taxon>
        <taxon>Enterobacterales</taxon>
        <taxon>Enterobacteriaceae</taxon>
        <taxon>Salmonella</taxon>
    </lineage>
</organism>
<name>RHAR_SALPB</name>
<protein>
    <recommendedName>
        <fullName evidence="1">HTH-type transcriptional activator RhaR</fullName>
    </recommendedName>
    <alternativeName>
        <fullName evidence="1">L-rhamnose operon transcriptional activator RhaR</fullName>
    </alternativeName>
</protein>
<dbReference type="EMBL" id="CP000886">
    <property type="protein sequence ID" value="ABX70307.1"/>
    <property type="molecule type" value="Genomic_DNA"/>
</dbReference>
<dbReference type="RefSeq" id="WP_000013290.1">
    <property type="nucleotide sequence ID" value="NC_010102.1"/>
</dbReference>
<dbReference type="SMR" id="A9MZC9"/>
<dbReference type="KEGG" id="spq:SPAB_05016"/>
<dbReference type="PATRIC" id="fig|1016998.12.peg.4708"/>
<dbReference type="HOGENOM" id="CLU_000445_88_5_6"/>
<dbReference type="BioCyc" id="SENT1016998:SPAB_RS20410-MONOMER"/>
<dbReference type="Proteomes" id="UP000008556">
    <property type="component" value="Chromosome"/>
</dbReference>
<dbReference type="GO" id="GO:0005737">
    <property type="term" value="C:cytoplasm"/>
    <property type="evidence" value="ECO:0007669"/>
    <property type="project" value="UniProtKB-SubCell"/>
</dbReference>
<dbReference type="GO" id="GO:0003700">
    <property type="term" value="F:DNA-binding transcription factor activity"/>
    <property type="evidence" value="ECO:0007669"/>
    <property type="project" value="UniProtKB-UniRule"/>
</dbReference>
<dbReference type="GO" id="GO:0043565">
    <property type="term" value="F:sequence-specific DNA binding"/>
    <property type="evidence" value="ECO:0007669"/>
    <property type="project" value="InterPro"/>
</dbReference>
<dbReference type="GO" id="GO:0045893">
    <property type="term" value="P:positive regulation of DNA-templated transcription"/>
    <property type="evidence" value="ECO:0007669"/>
    <property type="project" value="UniProtKB-UniRule"/>
</dbReference>
<dbReference type="GO" id="GO:0019299">
    <property type="term" value="P:rhamnose metabolic process"/>
    <property type="evidence" value="ECO:0007669"/>
    <property type="project" value="UniProtKB-UniRule"/>
</dbReference>
<dbReference type="CDD" id="cd06977">
    <property type="entry name" value="cupin_RhaR_RhaS-like_N"/>
    <property type="match status" value="1"/>
</dbReference>
<dbReference type="Gene3D" id="1.10.10.60">
    <property type="entry name" value="Homeodomain-like"/>
    <property type="match status" value="2"/>
</dbReference>
<dbReference type="Gene3D" id="2.60.120.10">
    <property type="entry name" value="Jelly Rolls"/>
    <property type="match status" value="1"/>
</dbReference>
<dbReference type="HAMAP" id="MF_01533">
    <property type="entry name" value="HTH_type_RhaR"/>
    <property type="match status" value="1"/>
</dbReference>
<dbReference type="InterPro" id="IPR003313">
    <property type="entry name" value="AraC-bd"/>
</dbReference>
<dbReference type="InterPro" id="IPR009057">
    <property type="entry name" value="Homeodomain-like_sf"/>
</dbReference>
<dbReference type="InterPro" id="IPR018060">
    <property type="entry name" value="HTH_AraC"/>
</dbReference>
<dbReference type="InterPro" id="IPR018062">
    <property type="entry name" value="HTH_AraC-typ_CS"/>
</dbReference>
<dbReference type="InterPro" id="IPR047220">
    <property type="entry name" value="RhaR_RhaS-like_N"/>
</dbReference>
<dbReference type="InterPro" id="IPR014710">
    <property type="entry name" value="RmlC-like_jellyroll"/>
</dbReference>
<dbReference type="InterPro" id="IPR011051">
    <property type="entry name" value="RmlC_Cupin_sf"/>
</dbReference>
<dbReference type="InterPro" id="IPR023699">
    <property type="entry name" value="Tscrpt_act_RhaR"/>
</dbReference>
<dbReference type="InterPro" id="IPR020449">
    <property type="entry name" value="Tscrpt_reg_AraC-type_HTH"/>
</dbReference>
<dbReference type="NCBIfam" id="NF010025">
    <property type="entry name" value="PRK13500.1"/>
    <property type="match status" value="1"/>
</dbReference>
<dbReference type="NCBIfam" id="NF010026">
    <property type="entry name" value="PRK13501.1"/>
    <property type="match status" value="1"/>
</dbReference>
<dbReference type="NCBIfam" id="NF010027">
    <property type="entry name" value="PRK13502.1"/>
    <property type="match status" value="1"/>
</dbReference>
<dbReference type="PANTHER" id="PTHR43280">
    <property type="entry name" value="ARAC-FAMILY TRANSCRIPTIONAL REGULATOR"/>
    <property type="match status" value="1"/>
</dbReference>
<dbReference type="PANTHER" id="PTHR43280:SF13">
    <property type="entry name" value="HTH-TYPE TRANSCRIPTIONAL ACTIVATOR RHAR"/>
    <property type="match status" value="1"/>
</dbReference>
<dbReference type="Pfam" id="PF02311">
    <property type="entry name" value="AraC_binding"/>
    <property type="match status" value="1"/>
</dbReference>
<dbReference type="Pfam" id="PF12833">
    <property type="entry name" value="HTH_18"/>
    <property type="match status" value="1"/>
</dbReference>
<dbReference type="PRINTS" id="PR00032">
    <property type="entry name" value="HTHARAC"/>
</dbReference>
<dbReference type="SMART" id="SM00342">
    <property type="entry name" value="HTH_ARAC"/>
    <property type="match status" value="1"/>
</dbReference>
<dbReference type="SUPFAM" id="SSF46689">
    <property type="entry name" value="Homeodomain-like"/>
    <property type="match status" value="1"/>
</dbReference>
<dbReference type="SUPFAM" id="SSF51182">
    <property type="entry name" value="RmlC-like cupins"/>
    <property type="match status" value="1"/>
</dbReference>
<dbReference type="PROSITE" id="PS00041">
    <property type="entry name" value="HTH_ARAC_FAMILY_1"/>
    <property type="match status" value="1"/>
</dbReference>
<dbReference type="PROSITE" id="PS01124">
    <property type="entry name" value="HTH_ARAC_FAMILY_2"/>
    <property type="match status" value="1"/>
</dbReference>
<sequence length="282" mass="32858">MANQLILLKKDFFTDEQQAVTVADRYPQDVFAEHTHEFCELVMVWRGNGLHVLNERPYRITRGDLFYIRAEDKHSYTSVNDLVLQNIIYCPERLKLNVNWQAMIPGFQGAQWHPHWRLGSMGMNQARQVINQLEHESNGRDPLANEMAELLFGQLVMTLKRHRYATDDLPATSRETLLDKLITALANSLECPFALDAFCQQEQCSERVLRQQFRAQTGMTINQYLRQVRICHAQYLLQHSPLMISEISMQCGFEDSNYFSVVFTRETGMTPSQWRHLSNQSD</sequence>
<proteinExistence type="inferred from homology"/>